<gene>
    <name evidence="1" type="primary">secB</name>
    <name type="ordered locus">ECH_0233</name>
</gene>
<keyword id="KW-0143">Chaperone</keyword>
<keyword id="KW-0963">Cytoplasm</keyword>
<keyword id="KW-0653">Protein transport</keyword>
<keyword id="KW-1185">Reference proteome</keyword>
<keyword id="KW-0811">Translocation</keyword>
<keyword id="KW-0813">Transport</keyword>
<protein>
    <recommendedName>
        <fullName evidence="1">Protein-export protein SecB</fullName>
    </recommendedName>
</protein>
<accession>Q2GHM9</accession>
<name>SECB_EHRCR</name>
<dbReference type="EMBL" id="CP000236">
    <property type="protein sequence ID" value="ABD45000.1"/>
    <property type="molecule type" value="Genomic_DNA"/>
</dbReference>
<dbReference type="RefSeq" id="WP_006010006.1">
    <property type="nucleotide sequence ID" value="NC_007799.1"/>
</dbReference>
<dbReference type="SMR" id="Q2GHM9"/>
<dbReference type="STRING" id="205920.ECH_0233"/>
<dbReference type="KEGG" id="ech:ECH_0233"/>
<dbReference type="eggNOG" id="COG1952">
    <property type="taxonomic scope" value="Bacteria"/>
</dbReference>
<dbReference type="HOGENOM" id="CLU_111574_0_0_5"/>
<dbReference type="OrthoDB" id="9795145at2"/>
<dbReference type="Proteomes" id="UP000008320">
    <property type="component" value="Chromosome"/>
</dbReference>
<dbReference type="GO" id="GO:0005737">
    <property type="term" value="C:cytoplasm"/>
    <property type="evidence" value="ECO:0007669"/>
    <property type="project" value="UniProtKB-SubCell"/>
</dbReference>
<dbReference type="GO" id="GO:0051082">
    <property type="term" value="F:unfolded protein binding"/>
    <property type="evidence" value="ECO:0007669"/>
    <property type="project" value="InterPro"/>
</dbReference>
<dbReference type="GO" id="GO:0006457">
    <property type="term" value="P:protein folding"/>
    <property type="evidence" value="ECO:0007669"/>
    <property type="project" value="UniProtKB-UniRule"/>
</dbReference>
<dbReference type="GO" id="GO:0051262">
    <property type="term" value="P:protein tetramerization"/>
    <property type="evidence" value="ECO:0007669"/>
    <property type="project" value="InterPro"/>
</dbReference>
<dbReference type="GO" id="GO:0015031">
    <property type="term" value="P:protein transport"/>
    <property type="evidence" value="ECO:0007669"/>
    <property type="project" value="UniProtKB-UniRule"/>
</dbReference>
<dbReference type="Gene3D" id="3.10.420.10">
    <property type="entry name" value="SecB-like"/>
    <property type="match status" value="1"/>
</dbReference>
<dbReference type="HAMAP" id="MF_00821">
    <property type="entry name" value="SecB"/>
    <property type="match status" value="1"/>
</dbReference>
<dbReference type="InterPro" id="IPR003708">
    <property type="entry name" value="SecB"/>
</dbReference>
<dbReference type="InterPro" id="IPR035958">
    <property type="entry name" value="SecB-like_sf"/>
</dbReference>
<dbReference type="NCBIfam" id="NF004392">
    <property type="entry name" value="PRK05751.1-3"/>
    <property type="match status" value="1"/>
</dbReference>
<dbReference type="NCBIfam" id="TIGR00809">
    <property type="entry name" value="secB"/>
    <property type="match status" value="1"/>
</dbReference>
<dbReference type="PANTHER" id="PTHR36918">
    <property type="match status" value="1"/>
</dbReference>
<dbReference type="PANTHER" id="PTHR36918:SF1">
    <property type="entry name" value="PROTEIN-EXPORT PROTEIN SECB"/>
    <property type="match status" value="1"/>
</dbReference>
<dbReference type="Pfam" id="PF02556">
    <property type="entry name" value="SecB"/>
    <property type="match status" value="1"/>
</dbReference>
<dbReference type="SUPFAM" id="SSF54611">
    <property type="entry name" value="SecB-like"/>
    <property type="match status" value="1"/>
</dbReference>
<feature type="chain" id="PRO_1000062474" description="Protein-export protein SecB">
    <location>
        <begin position="1"/>
        <end position="175"/>
    </location>
</feature>
<reference key="1">
    <citation type="journal article" date="2006" name="PLoS Genet.">
        <title>Comparative genomics of emerging human ehrlichiosis agents.</title>
        <authorList>
            <person name="Dunning Hotopp J.C."/>
            <person name="Lin M."/>
            <person name="Madupu R."/>
            <person name="Crabtree J."/>
            <person name="Angiuoli S.V."/>
            <person name="Eisen J.A."/>
            <person name="Seshadri R."/>
            <person name="Ren Q."/>
            <person name="Wu M."/>
            <person name="Utterback T.R."/>
            <person name="Smith S."/>
            <person name="Lewis M."/>
            <person name="Khouri H."/>
            <person name="Zhang C."/>
            <person name="Niu H."/>
            <person name="Lin Q."/>
            <person name="Ohashi N."/>
            <person name="Zhi N."/>
            <person name="Nelson W.C."/>
            <person name="Brinkac L.M."/>
            <person name="Dodson R.J."/>
            <person name="Rosovitz M.J."/>
            <person name="Sundaram J.P."/>
            <person name="Daugherty S.C."/>
            <person name="Davidsen T."/>
            <person name="Durkin A.S."/>
            <person name="Gwinn M.L."/>
            <person name="Haft D.H."/>
            <person name="Selengut J.D."/>
            <person name="Sullivan S.A."/>
            <person name="Zafar N."/>
            <person name="Zhou L."/>
            <person name="Benahmed F."/>
            <person name="Forberger H."/>
            <person name="Halpin R."/>
            <person name="Mulligan S."/>
            <person name="Robinson J."/>
            <person name="White O."/>
            <person name="Rikihisa Y."/>
            <person name="Tettelin H."/>
        </authorList>
    </citation>
    <scope>NUCLEOTIDE SEQUENCE [LARGE SCALE GENOMIC DNA]</scope>
    <source>
        <strain>ATCC CRL-10679 / Arkansas</strain>
    </source>
</reference>
<sequence length="175" mass="19466">MSCKLKVKGQYIKDLSFENPNSPQIFLMISKTPPEINISINVSSVSLPVKAQDQSSEQPSDNKVEPLYEVTLQVNAEARVGTTVAFICEIKYCGVFSIESDDVSIEELSQQDIRDVLLISAPTILFPFVRELISRVTSTGGFPPLMLDIVDFRAMYESQMKQGVGQNDNSQDPEK</sequence>
<comment type="function">
    <text evidence="1">One of the proteins required for the normal export of preproteins out of the cell cytoplasm. It is a molecular chaperone that binds to a subset of precursor proteins, maintaining them in a translocation-competent state. It also specifically binds to its receptor SecA.</text>
</comment>
<comment type="subunit">
    <text evidence="1">Homotetramer, a dimer of dimers. One homotetramer interacts with 1 SecA dimer.</text>
</comment>
<comment type="subcellular location">
    <subcellularLocation>
        <location evidence="1">Cytoplasm</location>
    </subcellularLocation>
</comment>
<comment type="similarity">
    <text evidence="1">Belongs to the SecB family.</text>
</comment>
<evidence type="ECO:0000255" key="1">
    <source>
        <dbReference type="HAMAP-Rule" id="MF_00821"/>
    </source>
</evidence>
<organism>
    <name type="scientific">Ehrlichia chaffeensis (strain ATCC CRL-10679 / Arkansas)</name>
    <dbReference type="NCBI Taxonomy" id="205920"/>
    <lineage>
        <taxon>Bacteria</taxon>
        <taxon>Pseudomonadati</taxon>
        <taxon>Pseudomonadota</taxon>
        <taxon>Alphaproteobacteria</taxon>
        <taxon>Rickettsiales</taxon>
        <taxon>Anaplasmataceae</taxon>
        <taxon>Ehrlichia</taxon>
    </lineage>
</organism>
<proteinExistence type="inferred from homology"/>